<accession>Q24895</accession>
<evidence type="ECO:0000250" key="1">
    <source>
        <dbReference type="UniProtKB" id="G3I8R9"/>
    </source>
</evidence>
<evidence type="ECO:0000250" key="2">
    <source>
        <dbReference type="UniProtKB" id="P11021"/>
    </source>
</evidence>
<evidence type="ECO:0000250" key="3">
    <source>
        <dbReference type="UniProtKB" id="P20029"/>
    </source>
</evidence>
<evidence type="ECO:0000255" key="4"/>
<evidence type="ECO:0000303" key="5">
    <source>
    </source>
</evidence>
<evidence type="ECO:0000305" key="6"/>
<sequence>MGLSTYVGTFLLCILTLSHCKSGKEEYGTVIGIDLGTTYSCVGVFKNGRVEIIANDQGNRITPSYVAFSGDGERLIGDAAKNQLTSNPKNTLFDAKRLIGRDYDDKDVQGDIKRYPFKVINKNNKPYMKVQVGSEEKGFAPEEVSAMVLSKMKEIAEAYLGTEVTHAVVTVPAYFNDAQRQATKDAGAIAGLTVLRIINEPTAAAIAYGLDKKDTEKNILVFDLGGGTFDVSLLTIDNGVFEVVATSGDTHLGGEDFDQRLIDYFVKLYKKKEGKDITKDDRAVQKLRREVEKAKRTLSTEHSTMIEIDNLFEGKDFSEPLTRARFEELNNDLFRSTLKPVMKVMEDSGLKKEDIDDIVLVGGSTRIPKIQQLVKEFFNVKEPSRGINPDEAVAYGAAVQAGVISGVEDTGDIVLLDVCPLTMGIETVGGVMTKLIPRNTVIPTKKSQIFSTAADNQPTVTIQVFEGERPMTKDNHFLGKFDLTGIPPAPRGLPQIEVTFEIDVNGILRVSAEDKGTGKKSNIVINKETNRLTPEEIERMIQDAEKFSDQDKQVKERVEVRNDLESLAYSIKNQVKDKEKMGGKLSDDEIKTIEDAADEAIKWMENNPQAETSDYKKQKANLESVVQPIVSKLYEGAAPPTESTPKEEL</sequence>
<protein>
    <recommendedName>
        <fullName evidence="2">Endoplasmic reticulum chaperone BiP</fullName>
        <ecNumber evidence="2">3.6.4.10</ecNumber>
    </recommendedName>
    <alternativeName>
        <fullName evidence="5">78 kDa glucose-regulated protein homolog</fullName>
        <shortName evidence="5">GRP-78 homolog</shortName>
    </alternativeName>
    <alternativeName>
        <fullName evidence="2">Binding-immunoglobulin protein homolog</fullName>
        <shortName evidence="2">BiP</shortName>
    </alternativeName>
</protein>
<keyword id="KW-0067">ATP-binding</keyword>
<keyword id="KW-0143">Chaperone</keyword>
<keyword id="KW-0256">Endoplasmic reticulum</keyword>
<keyword id="KW-0378">Hydrolase</keyword>
<keyword id="KW-0547">Nucleotide-binding</keyword>
<keyword id="KW-0732">Signal</keyword>
<gene>
    <name evidence="5" type="primary">GRP78</name>
</gene>
<reference key="1">
    <citation type="journal article" date="1995" name="Mol. Biochem. Parasitol.">
        <title>Molecular cloning and characterization of an Echinococcus multilocularis and Echinococcus granulosus stress protein homologous to the mammalian 78 kDa glucose regulated protein.</title>
        <authorList>
            <person name="Muhlschlegel F."/>
            <person name="Frosch P."/>
            <person name="Castro A."/>
            <person name="Apfel H."/>
            <person name="Muller A."/>
            <person name="Frosch M."/>
        </authorList>
    </citation>
    <scope>NUCLEOTIDE SEQUENCE [MRNA]</scope>
</reference>
<feature type="signal peptide" evidence="4">
    <location>
        <begin position="1"/>
        <end position="20"/>
    </location>
</feature>
<feature type="chain" id="PRO_0000013574" description="Endoplasmic reticulum chaperone BiP">
    <location>
        <begin position="21"/>
        <end position="649"/>
    </location>
</feature>
<feature type="region of interest" description="Nucleotide-binding (NBD)" evidence="2">
    <location>
        <begin position="125"/>
        <end position="279"/>
    </location>
</feature>
<feature type="region of interest" description="Substrate-binding (SBD)" evidence="2">
    <location>
        <begin position="399"/>
        <end position="499"/>
    </location>
</feature>
<feature type="short sequence motif" description="Prevents secretion from ER">
    <location>
        <begin position="646"/>
        <end position="649"/>
    </location>
</feature>
<feature type="binding site" evidence="2">
    <location>
        <begin position="36"/>
        <end position="39"/>
    </location>
    <ligand>
        <name>ATP</name>
        <dbReference type="ChEBI" id="CHEBI:30616"/>
    </ligand>
</feature>
<feature type="binding site" evidence="2">
    <location>
        <position position="96"/>
    </location>
    <ligand>
        <name>ATP</name>
        <dbReference type="ChEBI" id="CHEBI:30616"/>
    </ligand>
</feature>
<feature type="binding site" evidence="2">
    <location>
        <begin position="226"/>
        <end position="228"/>
    </location>
    <ligand>
        <name>ATP</name>
        <dbReference type="ChEBI" id="CHEBI:30616"/>
    </ligand>
</feature>
<feature type="binding site" evidence="2">
    <location>
        <begin position="292"/>
        <end position="299"/>
    </location>
    <ligand>
        <name>ATP</name>
        <dbReference type="ChEBI" id="CHEBI:30616"/>
    </ligand>
</feature>
<feature type="binding site" evidence="2">
    <location>
        <begin position="363"/>
        <end position="366"/>
    </location>
    <ligand>
        <name>ATP</name>
        <dbReference type="ChEBI" id="CHEBI:30616"/>
    </ligand>
</feature>
<comment type="function">
    <text evidence="1 2 3">Endoplasmic reticulum chaperone that plays a key role in protein folding and quality control in the endoplasmic reticulum lumen. Involved in the correct folding of proteins and degradation of misfolded proteins (By similarity). Acts as a key repressor of the unfolded protein response (UPR) (By similarity).</text>
</comment>
<comment type="catalytic activity">
    <reaction evidence="2">
        <text>ATP + H2O = ADP + phosphate + H(+)</text>
        <dbReference type="Rhea" id="RHEA:13065"/>
        <dbReference type="ChEBI" id="CHEBI:15377"/>
        <dbReference type="ChEBI" id="CHEBI:15378"/>
        <dbReference type="ChEBI" id="CHEBI:30616"/>
        <dbReference type="ChEBI" id="CHEBI:43474"/>
        <dbReference type="ChEBI" id="CHEBI:456216"/>
        <dbReference type="EC" id="3.6.4.10"/>
    </reaction>
</comment>
<comment type="activity regulation">
    <text evidence="2">The chaperone activity is regulated by ATP-induced allosteric coupling of the nucleotide-binding (NBD) and substrate-binding (SBD) domains. In the ADP-bound and nucleotide-free (apo) states, the two domains have little interaction. In contrast, in the ATP-bound state the two domains are tightly coupled, which results in drastically accelerated kinetics in both binding and release of polypeptide substrates. J domain-containing co-chaperones stimulate the ATPase activity and are required for efficient substrate recognition.</text>
</comment>
<comment type="subcellular location">
    <subcellularLocation>
        <location evidence="2">Endoplasmic reticulum lumen</location>
    </subcellularLocation>
</comment>
<comment type="similarity">
    <text evidence="6">Belongs to the heat shock protein 70 family.</text>
</comment>
<proteinExistence type="evidence at transcript level"/>
<name>BIP_ECHMU</name>
<organism>
    <name type="scientific">Echinococcus multilocularis</name>
    <name type="common">Fox tapeworm</name>
    <dbReference type="NCBI Taxonomy" id="6211"/>
    <lineage>
        <taxon>Eukaryota</taxon>
        <taxon>Metazoa</taxon>
        <taxon>Spiralia</taxon>
        <taxon>Lophotrochozoa</taxon>
        <taxon>Platyhelminthes</taxon>
        <taxon>Cestoda</taxon>
        <taxon>Eucestoda</taxon>
        <taxon>Cyclophyllidea</taxon>
        <taxon>Taeniidae</taxon>
        <taxon>Echinococcus</taxon>
    </lineage>
</organism>
<dbReference type="EC" id="3.6.4.10" evidence="2"/>
<dbReference type="EMBL" id="M63604">
    <property type="protein sequence ID" value="AAC37258.1"/>
    <property type="molecule type" value="mRNA"/>
</dbReference>
<dbReference type="SMR" id="Q24895"/>
<dbReference type="eggNOG" id="KOG0100">
    <property type="taxonomic scope" value="Eukaryota"/>
</dbReference>
<dbReference type="GO" id="GO:0005788">
    <property type="term" value="C:endoplasmic reticulum lumen"/>
    <property type="evidence" value="ECO:0007669"/>
    <property type="project" value="UniProtKB-SubCell"/>
</dbReference>
<dbReference type="GO" id="GO:0005524">
    <property type="term" value="F:ATP binding"/>
    <property type="evidence" value="ECO:0007669"/>
    <property type="project" value="UniProtKB-KW"/>
</dbReference>
<dbReference type="GO" id="GO:0016887">
    <property type="term" value="F:ATP hydrolysis activity"/>
    <property type="evidence" value="ECO:0007669"/>
    <property type="project" value="RHEA"/>
</dbReference>
<dbReference type="GO" id="GO:0140662">
    <property type="term" value="F:ATP-dependent protein folding chaperone"/>
    <property type="evidence" value="ECO:0007669"/>
    <property type="project" value="InterPro"/>
</dbReference>
<dbReference type="CDD" id="cd10241">
    <property type="entry name" value="ASKHA_NBD_HSP70_BiP"/>
    <property type="match status" value="1"/>
</dbReference>
<dbReference type="FunFam" id="2.60.34.10:FF:000014">
    <property type="entry name" value="Chaperone protein DnaK HSP70"/>
    <property type="match status" value="1"/>
</dbReference>
<dbReference type="FunFam" id="3.30.420.40:FF:000720">
    <property type="entry name" value="Endoplasmic reticulum chaperone BiP"/>
    <property type="match status" value="1"/>
</dbReference>
<dbReference type="FunFam" id="3.90.640.10:FF:000153">
    <property type="entry name" value="Endoplasmic reticulum chaperone BiP"/>
    <property type="match status" value="1"/>
</dbReference>
<dbReference type="FunFam" id="3.30.30.30:FF:000001">
    <property type="entry name" value="heat shock 70 kDa protein-like"/>
    <property type="match status" value="1"/>
</dbReference>
<dbReference type="Gene3D" id="1.20.1270.10">
    <property type="match status" value="1"/>
</dbReference>
<dbReference type="Gene3D" id="3.30.420.40">
    <property type="match status" value="2"/>
</dbReference>
<dbReference type="Gene3D" id="3.90.640.10">
    <property type="entry name" value="Actin, Chain A, domain 4"/>
    <property type="match status" value="1"/>
</dbReference>
<dbReference type="Gene3D" id="2.60.34.10">
    <property type="entry name" value="Substrate Binding Domain Of DNAk, Chain A, domain 1"/>
    <property type="match status" value="1"/>
</dbReference>
<dbReference type="InterPro" id="IPR043129">
    <property type="entry name" value="ATPase_NBD"/>
</dbReference>
<dbReference type="InterPro" id="IPR042050">
    <property type="entry name" value="BIP_NBD"/>
</dbReference>
<dbReference type="InterPro" id="IPR018181">
    <property type="entry name" value="Heat_shock_70_CS"/>
</dbReference>
<dbReference type="InterPro" id="IPR029048">
    <property type="entry name" value="HSP70_C_sf"/>
</dbReference>
<dbReference type="InterPro" id="IPR029047">
    <property type="entry name" value="HSP70_peptide-bd_sf"/>
</dbReference>
<dbReference type="InterPro" id="IPR013126">
    <property type="entry name" value="Hsp_70_fam"/>
</dbReference>
<dbReference type="NCBIfam" id="NF001413">
    <property type="entry name" value="PRK00290.1"/>
    <property type="match status" value="1"/>
</dbReference>
<dbReference type="PANTHER" id="PTHR19375">
    <property type="entry name" value="HEAT SHOCK PROTEIN 70KDA"/>
    <property type="match status" value="1"/>
</dbReference>
<dbReference type="Pfam" id="PF00012">
    <property type="entry name" value="HSP70"/>
    <property type="match status" value="1"/>
</dbReference>
<dbReference type="PRINTS" id="PR00301">
    <property type="entry name" value="HEATSHOCK70"/>
</dbReference>
<dbReference type="SUPFAM" id="SSF53067">
    <property type="entry name" value="Actin-like ATPase domain"/>
    <property type="match status" value="2"/>
</dbReference>
<dbReference type="SUPFAM" id="SSF100934">
    <property type="entry name" value="Heat shock protein 70kD (HSP70), C-terminal subdomain"/>
    <property type="match status" value="1"/>
</dbReference>
<dbReference type="SUPFAM" id="SSF100920">
    <property type="entry name" value="Heat shock protein 70kD (HSP70), peptide-binding domain"/>
    <property type="match status" value="1"/>
</dbReference>
<dbReference type="PROSITE" id="PS00014">
    <property type="entry name" value="ER_TARGET"/>
    <property type="match status" value="1"/>
</dbReference>
<dbReference type="PROSITE" id="PS00297">
    <property type="entry name" value="HSP70_1"/>
    <property type="match status" value="1"/>
</dbReference>
<dbReference type="PROSITE" id="PS00329">
    <property type="entry name" value="HSP70_2"/>
    <property type="match status" value="1"/>
</dbReference>
<dbReference type="PROSITE" id="PS01036">
    <property type="entry name" value="HSP70_3"/>
    <property type="match status" value="1"/>
</dbReference>